<evidence type="ECO:0000255" key="1">
    <source>
        <dbReference type="HAMAP-Rule" id="MF_02053"/>
    </source>
</evidence>
<accession>Q1C142</accession>
<reference key="1">
    <citation type="journal article" date="2006" name="J. Bacteriol.">
        <title>Complete genome sequence of Yersinia pestis strains Antiqua and Nepal516: evidence of gene reduction in an emerging pathogen.</title>
        <authorList>
            <person name="Chain P.S.G."/>
            <person name="Hu P."/>
            <person name="Malfatti S.A."/>
            <person name="Radnedge L."/>
            <person name="Larimer F."/>
            <person name="Vergez L.M."/>
            <person name="Worsham P."/>
            <person name="Chu M.C."/>
            <person name="Andersen G.L."/>
        </authorList>
    </citation>
    <scope>NUCLEOTIDE SEQUENCE [LARGE SCALE GENOMIC DNA]</scope>
    <source>
        <strain>Antiqua</strain>
    </source>
</reference>
<organism>
    <name type="scientific">Yersinia pestis bv. Antiqua (strain Antiqua)</name>
    <dbReference type="NCBI Taxonomy" id="360102"/>
    <lineage>
        <taxon>Bacteria</taxon>
        <taxon>Pseudomonadati</taxon>
        <taxon>Pseudomonadota</taxon>
        <taxon>Gammaproteobacteria</taxon>
        <taxon>Enterobacterales</taxon>
        <taxon>Yersiniaceae</taxon>
        <taxon>Yersinia</taxon>
    </lineage>
</organism>
<sequence length="530" mass="57041">MSQLDTTTPSGDYLMALDAGTGSVRAVIFDLNGNQIAAGQAEWLHLPVPDVPGSMEFDLTTNWQLTCQCIRQALHLAKLPASAIRAVAACSMREGIVLYDRSGTPIWACANVDARASREVSELKELHNNGFELEVYQCSGQTLALSAMPRLLWLAHYRPDIYRQAGTLTMISDWLANMLSGELAVDPSNAGTTGMLDLVTRNWQPNLLEMAGLRADILSPVKETGTLLGHVTAKAAQECGLLAGTPVVMGGGDVQLGCLGLGVVHAGQTAVLGGTFWQQVVNLPQPIIDPNMNTRINPHVIPGMVQAESISFFTGLTMRWFRDAFCAEEKLLAQRLGIDTYSLLEDMAARVPAGAYGVMPIFSDVMRFKSWYHAAPSFINLSLDPEKCNKATLFRALEENAAIVSACNLAQIAEFSGVKASSVVFAGGGAKGKLWSQILADVTGVPVKVPVVKEATALGCAIAAGVGVGLYEALDKTGERLVRWEREYIPNTEHKALYQAAKTNWQAVYTDQLGLVDCGLTTSLWKAPCL</sequence>
<proteinExistence type="inferred from homology"/>
<feature type="chain" id="PRO_0000351604" description="Autoinducer-2 kinase">
    <location>
        <begin position="1"/>
        <end position="530"/>
    </location>
</feature>
<dbReference type="EC" id="2.7.1.189" evidence="1"/>
<dbReference type="EMBL" id="CP000308">
    <property type="protein sequence ID" value="ABG15830.1"/>
    <property type="molecule type" value="Genomic_DNA"/>
</dbReference>
<dbReference type="PIR" id="AF0051">
    <property type="entry name" value="AF0051"/>
</dbReference>
<dbReference type="RefSeq" id="WP_002209194.1">
    <property type="nucleotide sequence ID" value="NZ_CP009906.1"/>
</dbReference>
<dbReference type="SMR" id="Q1C142"/>
<dbReference type="GeneID" id="57974195"/>
<dbReference type="KEGG" id="ypa:YPA_3869"/>
<dbReference type="Proteomes" id="UP000001971">
    <property type="component" value="Chromosome"/>
</dbReference>
<dbReference type="GO" id="GO:0005737">
    <property type="term" value="C:cytoplasm"/>
    <property type="evidence" value="ECO:0007669"/>
    <property type="project" value="UniProtKB-SubCell"/>
</dbReference>
<dbReference type="GO" id="GO:0071518">
    <property type="term" value="F:autoinducer-2 kinase activity"/>
    <property type="evidence" value="ECO:0007669"/>
    <property type="project" value="UniProtKB-UniRule"/>
</dbReference>
<dbReference type="GO" id="GO:0005975">
    <property type="term" value="P:carbohydrate metabolic process"/>
    <property type="evidence" value="ECO:0007669"/>
    <property type="project" value="InterPro"/>
</dbReference>
<dbReference type="GO" id="GO:0009372">
    <property type="term" value="P:quorum sensing"/>
    <property type="evidence" value="ECO:0007669"/>
    <property type="project" value="InterPro"/>
</dbReference>
<dbReference type="CDD" id="cd07775">
    <property type="entry name" value="ASKHA_NBD_FGGY_AI-2K"/>
    <property type="match status" value="1"/>
</dbReference>
<dbReference type="Gene3D" id="3.30.420.40">
    <property type="match status" value="2"/>
</dbReference>
<dbReference type="HAMAP" id="MF_02053">
    <property type="entry name" value="LsrK"/>
    <property type="match status" value="1"/>
</dbReference>
<dbReference type="InterPro" id="IPR033676">
    <property type="entry name" value="AI-2_kinase"/>
</dbReference>
<dbReference type="InterPro" id="IPR043129">
    <property type="entry name" value="ATPase_NBD"/>
</dbReference>
<dbReference type="InterPro" id="IPR000577">
    <property type="entry name" value="Carb_kinase_FGGY"/>
</dbReference>
<dbReference type="InterPro" id="IPR018485">
    <property type="entry name" value="FGGY_C"/>
</dbReference>
<dbReference type="InterPro" id="IPR050406">
    <property type="entry name" value="FGGY_Carb_Kinase"/>
</dbReference>
<dbReference type="InterPro" id="IPR018484">
    <property type="entry name" value="FGGY_N"/>
</dbReference>
<dbReference type="NCBIfam" id="NF008187">
    <property type="entry name" value="PRK10939.1"/>
    <property type="match status" value="1"/>
</dbReference>
<dbReference type="PANTHER" id="PTHR43095:SF1">
    <property type="entry name" value="AUTOINDUCER-2 KINASE"/>
    <property type="match status" value="1"/>
</dbReference>
<dbReference type="PANTHER" id="PTHR43095">
    <property type="entry name" value="SUGAR KINASE"/>
    <property type="match status" value="1"/>
</dbReference>
<dbReference type="Pfam" id="PF02782">
    <property type="entry name" value="FGGY_C"/>
    <property type="match status" value="1"/>
</dbReference>
<dbReference type="Pfam" id="PF00370">
    <property type="entry name" value="FGGY_N"/>
    <property type="match status" value="1"/>
</dbReference>
<dbReference type="PIRSF" id="PIRSF000538">
    <property type="entry name" value="GlpK"/>
    <property type="match status" value="1"/>
</dbReference>
<dbReference type="SUPFAM" id="SSF53067">
    <property type="entry name" value="Actin-like ATPase domain"/>
    <property type="match status" value="2"/>
</dbReference>
<keyword id="KW-0963">Cytoplasm</keyword>
<keyword id="KW-0418">Kinase</keyword>
<keyword id="KW-0808">Transferase</keyword>
<name>LSRK_YERPA</name>
<gene>
    <name evidence="1" type="primary">lsrK</name>
    <name type="ordered locus">YPA_3869</name>
</gene>
<comment type="function">
    <text evidence="1">Catalyzes the phosphorylation of autoinducer-2 (AI-2) to phospho-AI-2, which subsequently inactivates the transcriptional regulator LsrR and leads to the transcription of the lsr operon. Phosphorylates the ring-open form of (S)-4,5-dihydroxypentane-2,3-dione (DPD), which is the precursor to all AI-2 signaling molecules, at the C5 position.</text>
</comment>
<comment type="catalytic activity">
    <reaction evidence="1">
        <text>(S)-4,5-dihydroxypentane-2,3-dione + ATP = (2S)-2-hydroxy-3,4-dioxopentyl phosphate + ADP + H(+)</text>
        <dbReference type="Rhea" id="RHEA:15377"/>
        <dbReference type="ChEBI" id="CHEBI:15378"/>
        <dbReference type="ChEBI" id="CHEBI:29484"/>
        <dbReference type="ChEBI" id="CHEBI:30616"/>
        <dbReference type="ChEBI" id="CHEBI:71677"/>
        <dbReference type="ChEBI" id="CHEBI:456216"/>
        <dbReference type="EC" id="2.7.1.189"/>
    </reaction>
</comment>
<comment type="subcellular location">
    <subcellularLocation>
        <location evidence="1">Cytoplasm</location>
    </subcellularLocation>
</comment>
<comment type="similarity">
    <text evidence="1">Belongs to the FGGY kinase family.</text>
</comment>
<protein>
    <recommendedName>
        <fullName evidence="1">Autoinducer-2 kinase</fullName>
        <shortName evidence="1">AI-2 kinase</shortName>
        <ecNumber evidence="1">2.7.1.189</ecNumber>
    </recommendedName>
</protein>